<sequence length="459" mass="49258">MMISEDISEPSSPDTPFDDSDLLNSSMTDDVSAQLAASGPIGVRAAAAIATGKKRKRPHSFETNPSIRRRQQTRLIRKLKATIDEYATRVGQQAVVLTCTPGKHDGNFKVFGAAPLENIMRNLKGIVLQDLDNALAQRAPQPSNENSDLYELPPLVIDGIPTSVNKMTQAQLRAFIPLMLKYSTGRGKPGWGKESCRPVWWPSDLPWANVRSDVRSEDEKRKVSWTHALVTIVINCYKHHGRDDLLPEFIEDKCKEIEASQNQVASLPTATLLPSHAVVHTINNPDGTVSLIQVDTGATVATLADVTQVQQLTNLQTLQQVRLQPLQIQHALGNQQAEATQAVQTLAEVAAAQGGDGELTEGQTVTTLPEGTQLVLASDGSLQAINDGTAQGIVIPASVYQTVVAGDGQPIQIANVNIAQQSGGGTTMAAIKNAVMQSQPIPSQVATLVVNAASHDQHT</sequence>
<keyword id="KW-0903">Direct protein sequencing</keyword>
<keyword id="KW-0238">DNA-binding</keyword>
<keyword id="KW-0539">Nucleus</keyword>
<keyword id="KW-1185">Reference proteome</keyword>
<keyword id="KW-0804">Transcription</keyword>
<keyword id="KW-0805">Transcription regulation</keyword>
<organism>
    <name type="scientific">Strongylocentrotus purpuratus</name>
    <name type="common">Purple sea urchin</name>
    <dbReference type="NCBI Taxonomy" id="7668"/>
    <lineage>
        <taxon>Eukaryota</taxon>
        <taxon>Metazoa</taxon>
        <taxon>Echinodermata</taxon>
        <taxon>Eleutherozoa</taxon>
        <taxon>Echinozoa</taxon>
        <taxon>Echinoidea</taxon>
        <taxon>Euechinoidea</taxon>
        <taxon>Echinacea</taxon>
        <taxon>Camarodonta</taxon>
        <taxon>Echinidea</taxon>
        <taxon>Strongylocentrotidae</taxon>
        <taxon>Strongylocentrotus</taxon>
    </lineage>
</organism>
<reference key="1">
    <citation type="journal article" date="1991" name="Development">
        <title>Gene regulatory factors of the sea urchin embryo. I. Purification by affinity chromatography and cloning of P3A2, a novel DNA-binding protein.</title>
        <authorList>
            <person name="Calzone F.J."/>
            <person name="Hoog C."/>
            <person name="Teplow D.B."/>
            <person name="Cutting A.E."/>
            <person name="Zeller R.W."/>
            <person name="Britten R.J."/>
            <person name="Davidson E.H."/>
        </authorList>
    </citation>
    <scope>NUCLEOTIDE SEQUENCE [MRNA]</scope>
    <scope>PARTIAL PROTEIN SEQUENCE</scope>
    <source>
        <tissue>Embryo</tissue>
    </source>
</reference>
<reference key="2">
    <citation type="journal article" date="1991" name="Development">
        <title>Gene regulatory factors of the sea urchin embryo. II. Two dissimilar proteins, P3A1 and P3A2, bind to the same target sites that are required for early territorial gene expression.</title>
        <authorList>
            <person name="Hoog C."/>
            <person name="Calzone F.J."/>
            <person name="Cutting A.E."/>
            <person name="Britten R.J."/>
            <person name="Davidson E.H."/>
        </authorList>
    </citation>
    <scope>CHARACTERIZATION</scope>
</reference>
<accession>Q04073</accession>
<protein>
    <recommendedName>
        <fullName>DNA-binding protein P3A2</fullName>
    </recommendedName>
</protein>
<dbReference type="EMBL" id="X57014">
    <property type="protein sequence ID" value="CAA40333.1"/>
    <property type="molecule type" value="mRNA"/>
</dbReference>
<dbReference type="PIR" id="S16434">
    <property type="entry name" value="S16434"/>
</dbReference>
<dbReference type="RefSeq" id="NP_999758.1">
    <property type="nucleotide sequence ID" value="NM_214593.1"/>
</dbReference>
<dbReference type="SMR" id="Q04073"/>
<dbReference type="FunCoup" id="Q04073">
    <property type="interactions" value="2409"/>
</dbReference>
<dbReference type="STRING" id="7668.Q04073"/>
<dbReference type="EnsemblMetazoa" id="NM_214593">
    <property type="protein sequence ID" value="NP_999758"/>
    <property type="gene ID" value="LOC373404"/>
</dbReference>
<dbReference type="GeneID" id="373404"/>
<dbReference type="KEGG" id="spu:373404"/>
<dbReference type="CTD" id="4899"/>
<dbReference type="eggNOG" id="ENOG502QTK1">
    <property type="taxonomic scope" value="Eukaryota"/>
</dbReference>
<dbReference type="HOGENOM" id="CLU_018156_3_1_1"/>
<dbReference type="InParanoid" id="Q04073"/>
<dbReference type="OrthoDB" id="10031051at2759"/>
<dbReference type="Proteomes" id="UP000007110">
    <property type="component" value="Unassembled WGS sequence"/>
</dbReference>
<dbReference type="GO" id="GO:0005634">
    <property type="term" value="C:nucleus"/>
    <property type="evidence" value="ECO:0000318"/>
    <property type="project" value="GO_Central"/>
</dbReference>
<dbReference type="GO" id="GO:0000981">
    <property type="term" value="F:DNA-binding transcription factor activity, RNA polymerase II-specific"/>
    <property type="evidence" value="ECO:0000318"/>
    <property type="project" value="GO_Central"/>
</dbReference>
<dbReference type="GO" id="GO:0000978">
    <property type="term" value="F:RNA polymerase II cis-regulatory region sequence-specific DNA binding"/>
    <property type="evidence" value="ECO:0000318"/>
    <property type="project" value="GO_Central"/>
</dbReference>
<dbReference type="GO" id="GO:0006357">
    <property type="term" value="P:regulation of transcription by RNA polymerase II"/>
    <property type="evidence" value="ECO:0000318"/>
    <property type="project" value="GO_Central"/>
</dbReference>
<dbReference type="InterPro" id="IPR039142">
    <property type="entry name" value="NRF1/Ewg"/>
</dbReference>
<dbReference type="InterPro" id="IPR019525">
    <property type="entry name" value="Nrf1_NLS/DNA-bd_dimer"/>
</dbReference>
<dbReference type="PANTHER" id="PTHR20338">
    <property type="entry name" value="NUCLEAR RESPIRATORY FACTOR 1"/>
    <property type="match status" value="1"/>
</dbReference>
<dbReference type="Pfam" id="PF10492">
    <property type="entry name" value="Nrf1_activ_bdg"/>
    <property type="match status" value="1"/>
</dbReference>
<dbReference type="Pfam" id="PF10491">
    <property type="entry name" value="Nrf1_DNA-bind"/>
    <property type="match status" value="1"/>
</dbReference>
<proteinExistence type="evidence at protein level"/>
<name>P3A2_STRPU</name>
<feature type="chain" id="PRO_0000100212" description="DNA-binding protein P3A2">
    <location>
        <begin position="1"/>
        <end position="459"/>
    </location>
</feature>
<feature type="region of interest" description="Disordered" evidence="1">
    <location>
        <begin position="1"/>
        <end position="25"/>
    </location>
</feature>
<comment type="function">
    <text>Transcriptional regulator that interacts with specific sites in the control region of the cyIIIa actin gene. Also binds specifically to similar target sites located in the regulatory region of the SM50 gene.</text>
</comment>
<comment type="subcellular location">
    <subcellularLocation>
        <location>Nucleus</location>
    </subcellularLocation>
</comment>
<comment type="similarity">
    <text evidence="2">Belongs to the NRF1/Ewg family.</text>
</comment>
<evidence type="ECO:0000256" key="1">
    <source>
        <dbReference type="SAM" id="MobiDB-lite"/>
    </source>
</evidence>
<evidence type="ECO:0000305" key="2"/>